<accession>A9KGQ0</accession>
<proteinExistence type="inferred from homology"/>
<protein>
    <recommendedName>
        <fullName evidence="1">Ribonuclease H</fullName>
        <shortName evidence="1">RNase H</shortName>
        <ecNumber evidence="1">3.1.26.4</ecNumber>
    </recommendedName>
</protein>
<name>RNH_COXBN</name>
<evidence type="ECO:0000255" key="1">
    <source>
        <dbReference type="HAMAP-Rule" id="MF_00042"/>
    </source>
</evidence>
<evidence type="ECO:0000255" key="2">
    <source>
        <dbReference type="PROSITE-ProRule" id="PRU00408"/>
    </source>
</evidence>
<organism>
    <name type="scientific">Coxiella burnetii (strain Dugway 5J108-111)</name>
    <dbReference type="NCBI Taxonomy" id="434922"/>
    <lineage>
        <taxon>Bacteria</taxon>
        <taxon>Pseudomonadati</taxon>
        <taxon>Pseudomonadota</taxon>
        <taxon>Gammaproteobacteria</taxon>
        <taxon>Legionellales</taxon>
        <taxon>Coxiellaceae</taxon>
        <taxon>Coxiella</taxon>
    </lineage>
</organism>
<feature type="chain" id="PRO_0000332585" description="Ribonuclease H">
    <location>
        <begin position="1"/>
        <end position="154"/>
    </location>
</feature>
<feature type="domain" description="RNase H type-1" evidence="2">
    <location>
        <begin position="5"/>
        <end position="146"/>
    </location>
</feature>
<feature type="binding site" evidence="1">
    <location>
        <position position="14"/>
    </location>
    <ligand>
        <name>Mg(2+)</name>
        <dbReference type="ChEBI" id="CHEBI:18420"/>
        <label>1</label>
    </ligand>
</feature>
<feature type="binding site" evidence="1">
    <location>
        <position position="14"/>
    </location>
    <ligand>
        <name>Mg(2+)</name>
        <dbReference type="ChEBI" id="CHEBI:18420"/>
        <label>2</label>
    </ligand>
</feature>
<feature type="binding site" evidence="1">
    <location>
        <position position="52"/>
    </location>
    <ligand>
        <name>Mg(2+)</name>
        <dbReference type="ChEBI" id="CHEBI:18420"/>
        <label>1</label>
    </ligand>
</feature>
<feature type="binding site" evidence="1">
    <location>
        <position position="74"/>
    </location>
    <ligand>
        <name>Mg(2+)</name>
        <dbReference type="ChEBI" id="CHEBI:18420"/>
        <label>1</label>
    </ligand>
</feature>
<feature type="binding site" evidence="1">
    <location>
        <position position="138"/>
    </location>
    <ligand>
        <name>Mg(2+)</name>
        <dbReference type="ChEBI" id="CHEBI:18420"/>
        <label>2</label>
    </ligand>
</feature>
<gene>
    <name evidence="1" type="primary">rnhA</name>
    <name type="ordered locus">CBUD_1763</name>
</gene>
<keyword id="KW-0963">Cytoplasm</keyword>
<keyword id="KW-0255">Endonuclease</keyword>
<keyword id="KW-0378">Hydrolase</keyword>
<keyword id="KW-0460">Magnesium</keyword>
<keyword id="KW-0479">Metal-binding</keyword>
<keyword id="KW-0540">Nuclease</keyword>
<reference key="1">
    <citation type="journal article" date="2009" name="Infect. Immun.">
        <title>Comparative genomics reveal extensive transposon-mediated genomic plasticity and diversity among potential effector proteins within the genus Coxiella.</title>
        <authorList>
            <person name="Beare P.A."/>
            <person name="Unsworth N."/>
            <person name="Andoh M."/>
            <person name="Voth D.E."/>
            <person name="Omsland A."/>
            <person name="Gilk S.D."/>
            <person name="Williams K.P."/>
            <person name="Sobral B.W."/>
            <person name="Kupko J.J. III"/>
            <person name="Porcella S.F."/>
            <person name="Samuel J.E."/>
            <person name="Heinzen R.A."/>
        </authorList>
    </citation>
    <scope>NUCLEOTIDE SEQUENCE [LARGE SCALE GENOMIC DNA]</scope>
    <source>
        <strain>Dugway 5J108-111</strain>
    </source>
</reference>
<sequence length="154" mass="17634">MAKQEQNIVYLYCDGACRGNPGPGGWGVLLRYNQHERQLHGGVANTTNNQMELTAAIEGLKSLKKPCQVVVTTDSQYLRRGITEWLPVWKRRGWRTSNKKPVKNQPLWETLEREVERHTIVWHWVKGHSGHAENEIADELANRGIDEVLKRGAQ</sequence>
<comment type="function">
    <text evidence="1">Endonuclease that specifically degrades the RNA of RNA-DNA hybrids.</text>
</comment>
<comment type="catalytic activity">
    <reaction evidence="1">
        <text>Endonucleolytic cleavage to 5'-phosphomonoester.</text>
        <dbReference type="EC" id="3.1.26.4"/>
    </reaction>
</comment>
<comment type="cofactor">
    <cofactor evidence="1">
        <name>Mg(2+)</name>
        <dbReference type="ChEBI" id="CHEBI:18420"/>
    </cofactor>
    <text evidence="1">Binds 1 Mg(2+) ion per subunit. May bind a second metal ion at a regulatory site, or after substrate binding.</text>
</comment>
<comment type="subunit">
    <text evidence="1">Monomer.</text>
</comment>
<comment type="subcellular location">
    <subcellularLocation>
        <location evidence="1">Cytoplasm</location>
    </subcellularLocation>
</comment>
<comment type="similarity">
    <text evidence="1">Belongs to the RNase H family.</text>
</comment>
<dbReference type="EC" id="3.1.26.4" evidence="1"/>
<dbReference type="EMBL" id="CP000733">
    <property type="protein sequence ID" value="ABS78120.1"/>
    <property type="molecule type" value="Genomic_DNA"/>
</dbReference>
<dbReference type="RefSeq" id="WP_011997258.1">
    <property type="nucleotide sequence ID" value="NC_009727.1"/>
</dbReference>
<dbReference type="SMR" id="A9KGQ0"/>
<dbReference type="KEGG" id="cbd:CBUD_1763"/>
<dbReference type="HOGENOM" id="CLU_030894_6_0_6"/>
<dbReference type="Proteomes" id="UP000008555">
    <property type="component" value="Chromosome"/>
</dbReference>
<dbReference type="GO" id="GO:0005737">
    <property type="term" value="C:cytoplasm"/>
    <property type="evidence" value="ECO:0007669"/>
    <property type="project" value="UniProtKB-SubCell"/>
</dbReference>
<dbReference type="GO" id="GO:0000287">
    <property type="term" value="F:magnesium ion binding"/>
    <property type="evidence" value="ECO:0007669"/>
    <property type="project" value="UniProtKB-UniRule"/>
</dbReference>
<dbReference type="GO" id="GO:0003676">
    <property type="term" value="F:nucleic acid binding"/>
    <property type="evidence" value="ECO:0007669"/>
    <property type="project" value="InterPro"/>
</dbReference>
<dbReference type="GO" id="GO:0004523">
    <property type="term" value="F:RNA-DNA hybrid ribonuclease activity"/>
    <property type="evidence" value="ECO:0007669"/>
    <property type="project" value="UniProtKB-UniRule"/>
</dbReference>
<dbReference type="GO" id="GO:0043137">
    <property type="term" value="P:DNA replication, removal of RNA primer"/>
    <property type="evidence" value="ECO:0007669"/>
    <property type="project" value="TreeGrafter"/>
</dbReference>
<dbReference type="CDD" id="cd09278">
    <property type="entry name" value="RNase_HI_prokaryote_like"/>
    <property type="match status" value="1"/>
</dbReference>
<dbReference type="FunFam" id="3.30.420.10:FF:000089">
    <property type="entry name" value="Ribonuclease H"/>
    <property type="match status" value="1"/>
</dbReference>
<dbReference type="Gene3D" id="3.30.420.10">
    <property type="entry name" value="Ribonuclease H-like superfamily/Ribonuclease H"/>
    <property type="match status" value="1"/>
</dbReference>
<dbReference type="HAMAP" id="MF_00042">
    <property type="entry name" value="RNase_H"/>
    <property type="match status" value="1"/>
</dbReference>
<dbReference type="InterPro" id="IPR050092">
    <property type="entry name" value="RNase_H"/>
</dbReference>
<dbReference type="InterPro" id="IPR012337">
    <property type="entry name" value="RNaseH-like_sf"/>
</dbReference>
<dbReference type="InterPro" id="IPR002156">
    <property type="entry name" value="RNaseH_domain"/>
</dbReference>
<dbReference type="InterPro" id="IPR036397">
    <property type="entry name" value="RNaseH_sf"/>
</dbReference>
<dbReference type="InterPro" id="IPR022892">
    <property type="entry name" value="RNaseHI"/>
</dbReference>
<dbReference type="NCBIfam" id="NF001236">
    <property type="entry name" value="PRK00203.1"/>
    <property type="match status" value="1"/>
</dbReference>
<dbReference type="PANTHER" id="PTHR10642">
    <property type="entry name" value="RIBONUCLEASE H1"/>
    <property type="match status" value="1"/>
</dbReference>
<dbReference type="PANTHER" id="PTHR10642:SF26">
    <property type="entry name" value="RIBONUCLEASE H1"/>
    <property type="match status" value="1"/>
</dbReference>
<dbReference type="Pfam" id="PF00075">
    <property type="entry name" value="RNase_H"/>
    <property type="match status" value="1"/>
</dbReference>
<dbReference type="SUPFAM" id="SSF53098">
    <property type="entry name" value="Ribonuclease H-like"/>
    <property type="match status" value="1"/>
</dbReference>
<dbReference type="PROSITE" id="PS50879">
    <property type="entry name" value="RNASE_H_1"/>
    <property type="match status" value="1"/>
</dbReference>